<accession>Q54CG0</accession>
<accession>Q8T682</accession>
<keyword id="KW-0067">ATP-binding</keyword>
<keyword id="KW-0472">Membrane</keyword>
<keyword id="KW-0547">Nucleotide-binding</keyword>
<keyword id="KW-1185">Reference proteome</keyword>
<keyword id="KW-0677">Repeat</keyword>
<keyword id="KW-0812">Transmembrane</keyword>
<keyword id="KW-1133">Transmembrane helix</keyword>
<keyword id="KW-0813">Transport</keyword>
<name>ABCGA_DICDI</name>
<organism>
    <name type="scientific">Dictyostelium discoideum</name>
    <name type="common">Social amoeba</name>
    <dbReference type="NCBI Taxonomy" id="44689"/>
    <lineage>
        <taxon>Eukaryota</taxon>
        <taxon>Amoebozoa</taxon>
        <taxon>Evosea</taxon>
        <taxon>Eumycetozoa</taxon>
        <taxon>Dictyostelia</taxon>
        <taxon>Dictyosteliales</taxon>
        <taxon>Dictyosteliaceae</taxon>
        <taxon>Dictyostelium</taxon>
    </lineage>
</organism>
<feature type="chain" id="PRO_0000391397" description="ABC transporter G family member 10">
    <location>
        <begin position="1"/>
        <end position="1466"/>
    </location>
</feature>
<feature type="transmembrane region" description="Helical" evidence="1">
    <location>
        <begin position="501"/>
        <end position="521"/>
    </location>
</feature>
<feature type="transmembrane region" description="Helical" evidence="1">
    <location>
        <begin position="537"/>
        <end position="557"/>
    </location>
</feature>
<feature type="transmembrane region" description="Helical" evidence="1">
    <location>
        <begin position="586"/>
        <end position="606"/>
    </location>
</feature>
<feature type="transmembrane region" description="Helical" evidence="1">
    <location>
        <begin position="611"/>
        <end position="631"/>
    </location>
</feature>
<feature type="transmembrane region" description="Helical" evidence="1">
    <location>
        <begin position="641"/>
        <end position="661"/>
    </location>
</feature>
<feature type="transmembrane region" description="Helical" evidence="1">
    <location>
        <begin position="767"/>
        <end position="787"/>
    </location>
</feature>
<feature type="transmembrane region" description="Helical" evidence="1">
    <location>
        <begin position="1178"/>
        <end position="1198"/>
    </location>
</feature>
<feature type="transmembrane region" description="Helical" evidence="1">
    <location>
        <begin position="1214"/>
        <end position="1234"/>
    </location>
</feature>
<feature type="transmembrane region" description="Helical" evidence="1">
    <location>
        <begin position="1253"/>
        <end position="1273"/>
    </location>
</feature>
<feature type="transmembrane region" description="Helical" evidence="1">
    <location>
        <begin position="1290"/>
        <end position="1310"/>
    </location>
</feature>
<feature type="transmembrane region" description="Helical" evidence="1">
    <location>
        <begin position="1319"/>
        <end position="1339"/>
    </location>
</feature>
<feature type="transmembrane region" description="Helical" evidence="1">
    <location>
        <begin position="1440"/>
        <end position="1460"/>
    </location>
</feature>
<feature type="domain" description="ABC transporter 1" evidence="2">
    <location>
        <begin position="138"/>
        <end position="392"/>
    </location>
</feature>
<feature type="domain" description="ABC transmembrane type-2 1">
    <location>
        <begin position="497"/>
        <end position="724"/>
    </location>
</feature>
<feature type="domain" description="ABC transporter 2" evidence="2">
    <location>
        <begin position="838"/>
        <end position="1082"/>
    </location>
</feature>
<feature type="domain" description="ABC transmembrane type-2 2">
    <location>
        <begin position="1177"/>
        <end position="1399"/>
    </location>
</feature>
<feature type="region of interest" description="Disordered" evidence="3">
    <location>
        <begin position="23"/>
        <end position="47"/>
    </location>
</feature>
<feature type="compositionally biased region" description="Low complexity" evidence="3">
    <location>
        <begin position="23"/>
        <end position="45"/>
    </location>
</feature>
<feature type="binding site" evidence="2">
    <location>
        <begin position="874"/>
        <end position="881"/>
    </location>
    <ligand>
        <name>ATP</name>
        <dbReference type="ChEBI" id="CHEBI:30616"/>
    </ligand>
</feature>
<feature type="sequence conflict" description="In Ref. 1; AAL91496." evidence="4" ref="1">
    <original>S</original>
    <variation>F</variation>
    <location>
        <position position="211"/>
    </location>
</feature>
<evidence type="ECO:0000255" key="1"/>
<evidence type="ECO:0000255" key="2">
    <source>
        <dbReference type="PROSITE-ProRule" id="PRU00434"/>
    </source>
</evidence>
<evidence type="ECO:0000256" key="3">
    <source>
        <dbReference type="SAM" id="MobiDB-lite"/>
    </source>
</evidence>
<evidence type="ECO:0000305" key="4"/>
<gene>
    <name type="primary">abcG10</name>
    <name type="ORF">DDB_G0292986</name>
</gene>
<sequence length="1466" mass="166602">MSDDYELKELQPPEGANCNYNINTPQYENNNNNNNNTSGNESPNILNSENQFNQVANELENDSKQFFSNQDPEMNVEHSNVAQNEQDFKLRSYFENSQRIALGNGQKPKKMGISIRNLTVVGKGADISVISDLSTPFVTIFNLFRPSTWRKSSGSTFDILHDVTLFNRDAEMLLVLGRPGAGCSTLLRVISNQRSSYVSVSGDVTYGGINSDEWKNFKGESIYTPEEDTHHPTLTVRETLNFALKCKTIHNRLPDEKKKTFRKKIYDLLVGMFGISKQSDTLVGNEFIRGLSGGERKRLTITEAMVSSASITCYDCSTRGLDAASALDYAKSIRIMSDTLHKTTIASFYQASDSIFNLFNNVAILEKGRLIYFGPVGLAKQYFLDLGFDCEPRKSTPDFLTGVTNPQERKVRPGFEGRAPETSSDFEKAWKSSDLYQVMLQQQLEYEKKIELEQPSTNFIEQIRNENSKTNPTKSIYTTSYFTQVRALIARNSQIIWGDRFALISKYISIIVQTFVYASLFYNMKSDVTGLFNRGGAIYAAILFNAFVSAGELGLTFYGRRILQKQHSYAMYRPSALHIAMVITDIPLTAIQVTIFSVIVYFMYGLQVDAGKFFIFLFTIFGSTLSMVAFFRALGNLSPSLYVSQNILNVFILFMFTYGGYSIPKNKMHPWFSWYFWINPFSFPYKALMANEFGDMNFTCNDQTAIPNGNYIASNGSTMSYQDQYRACPSAGAIEGQMVNGEFYVAGSNYIDAALDFKSDDRTLNVIITFLWWIFFVIINMIALELFDWTSGGMPHKVYKRGKAPKINDDEEERQQNAMVENATSKMKDTLKMRESCFTWNHIHYTVQLNGKDLLLLNDVEGWIKPGQMTALMGSSGAGKTTLLDVLAKRKTMGTVTGKCLLNGKELNIDFERITGYVEQMDVHNPGLTVREALRFSAKLRQEPTVSLQDKYEYVEQVLEMMEMKHLGDALIGSLETGIGISVEERKRLTIGIELVAKPHILFLDEPTSGLDSQSSYNIVKFIRKLADAGMPLVCTIHQPSSVLFEYFDRILLLAKGGKTVYYGDIGEKSKTLTSYFERNGVRSCTESENPAEYILEAIGAGTNPGVSTIDWPEVWKQSPELQDVQAELASLETAATVQISSDDQDHGPPREFATSIWYQTWEVYKRLNLIWWRDMSYVYGIFTQAAASGLIIGFTFWNLDLSSSDMNQRVFFIFEILFLGILYIFIAIPQFLIQKAYFKKDYASKFYSWCPFAISIVIVELPFVAVAGTICFFCSFWTAGIYYNGEYDFYFYITFILFLFICVSLGQVVSAFCFNVMLAQTILPLLLVMLFLFCGVLVPYEQIPNFWKFVYHSNPCRYFLEGVVTSVLKNVFVDCSNEDLTKFSNPTNLTCKEYFKPTYGNVRAVTKGDESECGYCVFKSGEEYYKTLGWSYENRLRNYGILWAFFIFNIIMVVSFVYLTKKPNR</sequence>
<dbReference type="EMBL" id="AF482389">
    <property type="protein sequence ID" value="AAL91496.1"/>
    <property type="molecule type" value="Genomic_DNA"/>
</dbReference>
<dbReference type="EMBL" id="AAFI02000198">
    <property type="protein sequence ID" value="EAL60948.1"/>
    <property type="molecule type" value="Genomic_DNA"/>
</dbReference>
<dbReference type="RefSeq" id="XP_629362.1">
    <property type="nucleotide sequence ID" value="XM_629360.1"/>
</dbReference>
<dbReference type="SMR" id="Q54CG0"/>
<dbReference type="FunCoup" id="Q54CG0">
    <property type="interactions" value="7"/>
</dbReference>
<dbReference type="STRING" id="44689.Q54CG0"/>
<dbReference type="TCDB" id="3.A.1.205.19">
    <property type="family name" value="the atp-binding cassette (abc) superfamily"/>
</dbReference>
<dbReference type="GlyGen" id="Q54CG0">
    <property type="glycosylation" value="1 site"/>
</dbReference>
<dbReference type="PaxDb" id="44689-DDB0214895"/>
<dbReference type="EnsemblProtists" id="EAL60948">
    <property type="protein sequence ID" value="EAL60948"/>
    <property type="gene ID" value="DDB_G0292986"/>
</dbReference>
<dbReference type="GeneID" id="8628979"/>
<dbReference type="KEGG" id="ddi:DDB_G0292986"/>
<dbReference type="dictyBase" id="DDB_G0292986">
    <property type="gene designation" value="abcG10"/>
</dbReference>
<dbReference type="VEuPathDB" id="AmoebaDB:DDB_G0292986"/>
<dbReference type="eggNOG" id="KOG0065">
    <property type="taxonomic scope" value="Eukaryota"/>
</dbReference>
<dbReference type="HOGENOM" id="CLU_000604_35_3_1"/>
<dbReference type="InParanoid" id="Q54CG0"/>
<dbReference type="OMA" id="FNIFAAC"/>
<dbReference type="PhylomeDB" id="Q54CG0"/>
<dbReference type="PRO" id="PR:Q54CG0"/>
<dbReference type="Proteomes" id="UP000002195">
    <property type="component" value="Chromosome 6"/>
</dbReference>
<dbReference type="GO" id="GO:0016020">
    <property type="term" value="C:membrane"/>
    <property type="evidence" value="ECO:0007669"/>
    <property type="project" value="UniProtKB-SubCell"/>
</dbReference>
<dbReference type="GO" id="GO:0140359">
    <property type="term" value="F:ABC-type transporter activity"/>
    <property type="evidence" value="ECO:0007669"/>
    <property type="project" value="InterPro"/>
</dbReference>
<dbReference type="GO" id="GO:0005524">
    <property type="term" value="F:ATP binding"/>
    <property type="evidence" value="ECO:0007669"/>
    <property type="project" value="UniProtKB-KW"/>
</dbReference>
<dbReference type="GO" id="GO:0016887">
    <property type="term" value="F:ATP hydrolysis activity"/>
    <property type="evidence" value="ECO:0007669"/>
    <property type="project" value="InterPro"/>
</dbReference>
<dbReference type="GO" id="GO:0031152">
    <property type="term" value="P:aggregation involved in sorocarp development"/>
    <property type="evidence" value="ECO:0000315"/>
    <property type="project" value="dictyBase"/>
</dbReference>
<dbReference type="GO" id="GO:0009617">
    <property type="term" value="P:response to bacterium"/>
    <property type="evidence" value="ECO:0007007"/>
    <property type="project" value="dictyBase"/>
</dbReference>
<dbReference type="GO" id="GO:0031288">
    <property type="term" value="P:sorocarp morphogenesis"/>
    <property type="evidence" value="ECO:0000315"/>
    <property type="project" value="dictyBase"/>
</dbReference>
<dbReference type="CDD" id="cd03233">
    <property type="entry name" value="ABCG_PDR_domain1"/>
    <property type="match status" value="1"/>
</dbReference>
<dbReference type="CDD" id="cd03232">
    <property type="entry name" value="ABCG_PDR_domain2"/>
    <property type="match status" value="1"/>
</dbReference>
<dbReference type="FunFam" id="3.40.50.300:FF:000054">
    <property type="entry name" value="ABC multidrug transporter atrF"/>
    <property type="match status" value="1"/>
</dbReference>
<dbReference type="FunFam" id="3.40.50.300:FF:002175">
    <property type="entry name" value="ABC transporter G family member 9"/>
    <property type="match status" value="1"/>
</dbReference>
<dbReference type="Gene3D" id="3.40.50.300">
    <property type="entry name" value="P-loop containing nucleotide triphosphate hydrolases"/>
    <property type="match status" value="2"/>
</dbReference>
<dbReference type="InterPro" id="IPR003593">
    <property type="entry name" value="AAA+_ATPase"/>
</dbReference>
<dbReference type="InterPro" id="IPR013525">
    <property type="entry name" value="ABC2_TM"/>
</dbReference>
<dbReference type="InterPro" id="IPR029481">
    <property type="entry name" value="ABC_trans_N"/>
</dbReference>
<dbReference type="InterPro" id="IPR003439">
    <property type="entry name" value="ABC_transporter-like_ATP-bd"/>
</dbReference>
<dbReference type="InterPro" id="IPR043926">
    <property type="entry name" value="ABCG_dom"/>
</dbReference>
<dbReference type="InterPro" id="IPR034001">
    <property type="entry name" value="ABCG_PDR_1"/>
</dbReference>
<dbReference type="InterPro" id="IPR034003">
    <property type="entry name" value="ABCG_PDR_2"/>
</dbReference>
<dbReference type="InterPro" id="IPR027417">
    <property type="entry name" value="P-loop_NTPase"/>
</dbReference>
<dbReference type="InterPro" id="IPR010929">
    <property type="entry name" value="PDR_CDR_ABC"/>
</dbReference>
<dbReference type="PANTHER" id="PTHR19241">
    <property type="entry name" value="ATP-BINDING CASSETTE TRANSPORTER"/>
    <property type="match status" value="1"/>
</dbReference>
<dbReference type="Pfam" id="PF01061">
    <property type="entry name" value="ABC2_membrane"/>
    <property type="match status" value="2"/>
</dbReference>
<dbReference type="Pfam" id="PF19055">
    <property type="entry name" value="ABC2_membrane_7"/>
    <property type="match status" value="1"/>
</dbReference>
<dbReference type="Pfam" id="PF00005">
    <property type="entry name" value="ABC_tran"/>
    <property type="match status" value="2"/>
</dbReference>
<dbReference type="Pfam" id="PF14510">
    <property type="entry name" value="ABC_trans_N"/>
    <property type="match status" value="1"/>
</dbReference>
<dbReference type="Pfam" id="PF06422">
    <property type="entry name" value="PDR_CDR"/>
    <property type="match status" value="1"/>
</dbReference>
<dbReference type="SMART" id="SM00382">
    <property type="entry name" value="AAA"/>
    <property type="match status" value="1"/>
</dbReference>
<dbReference type="SUPFAM" id="SSF52540">
    <property type="entry name" value="P-loop containing nucleoside triphosphate hydrolases"/>
    <property type="match status" value="2"/>
</dbReference>
<dbReference type="PROSITE" id="PS50893">
    <property type="entry name" value="ABC_TRANSPORTER_2"/>
    <property type="match status" value="2"/>
</dbReference>
<reference key="1">
    <citation type="journal article" date="2002" name="Eukaryot. Cell">
        <title>Evolutionary analyses of ABC transporters of Dictyostelium discoideum.</title>
        <authorList>
            <person name="Anjard C."/>
            <person name="Loomis W.F."/>
        </authorList>
    </citation>
    <scope>NUCLEOTIDE SEQUENCE [GENOMIC DNA]</scope>
    <scope>NOMENCLATURE</scope>
    <source>
        <strain>AX4</strain>
    </source>
</reference>
<reference key="2">
    <citation type="journal article" date="2005" name="Nature">
        <title>The genome of the social amoeba Dictyostelium discoideum.</title>
        <authorList>
            <person name="Eichinger L."/>
            <person name="Pachebat J.A."/>
            <person name="Gloeckner G."/>
            <person name="Rajandream M.A."/>
            <person name="Sucgang R."/>
            <person name="Berriman M."/>
            <person name="Song J."/>
            <person name="Olsen R."/>
            <person name="Szafranski K."/>
            <person name="Xu Q."/>
            <person name="Tunggal B."/>
            <person name="Kummerfeld S."/>
            <person name="Madera M."/>
            <person name="Konfortov B.A."/>
            <person name="Rivero F."/>
            <person name="Bankier A.T."/>
            <person name="Lehmann R."/>
            <person name="Hamlin N."/>
            <person name="Davies R."/>
            <person name="Gaudet P."/>
            <person name="Fey P."/>
            <person name="Pilcher K."/>
            <person name="Chen G."/>
            <person name="Saunders D."/>
            <person name="Sodergren E.J."/>
            <person name="Davis P."/>
            <person name="Kerhornou A."/>
            <person name="Nie X."/>
            <person name="Hall N."/>
            <person name="Anjard C."/>
            <person name="Hemphill L."/>
            <person name="Bason N."/>
            <person name="Farbrother P."/>
            <person name="Desany B."/>
            <person name="Just E."/>
            <person name="Morio T."/>
            <person name="Rost R."/>
            <person name="Churcher C.M."/>
            <person name="Cooper J."/>
            <person name="Haydock S."/>
            <person name="van Driessche N."/>
            <person name="Cronin A."/>
            <person name="Goodhead I."/>
            <person name="Muzny D.M."/>
            <person name="Mourier T."/>
            <person name="Pain A."/>
            <person name="Lu M."/>
            <person name="Harper D."/>
            <person name="Lindsay R."/>
            <person name="Hauser H."/>
            <person name="James K.D."/>
            <person name="Quiles M."/>
            <person name="Madan Babu M."/>
            <person name="Saito T."/>
            <person name="Buchrieser C."/>
            <person name="Wardroper A."/>
            <person name="Felder M."/>
            <person name="Thangavelu M."/>
            <person name="Johnson D."/>
            <person name="Knights A."/>
            <person name="Loulseged H."/>
            <person name="Mungall K.L."/>
            <person name="Oliver K."/>
            <person name="Price C."/>
            <person name="Quail M.A."/>
            <person name="Urushihara H."/>
            <person name="Hernandez J."/>
            <person name="Rabbinowitsch E."/>
            <person name="Steffen D."/>
            <person name="Sanders M."/>
            <person name="Ma J."/>
            <person name="Kohara Y."/>
            <person name="Sharp S."/>
            <person name="Simmonds M.N."/>
            <person name="Spiegler S."/>
            <person name="Tivey A."/>
            <person name="Sugano S."/>
            <person name="White B."/>
            <person name="Walker D."/>
            <person name="Woodward J.R."/>
            <person name="Winckler T."/>
            <person name="Tanaka Y."/>
            <person name="Shaulsky G."/>
            <person name="Schleicher M."/>
            <person name="Weinstock G.M."/>
            <person name="Rosenthal A."/>
            <person name="Cox E.C."/>
            <person name="Chisholm R.L."/>
            <person name="Gibbs R.A."/>
            <person name="Loomis W.F."/>
            <person name="Platzer M."/>
            <person name="Kay R.R."/>
            <person name="Williams J.G."/>
            <person name="Dear P.H."/>
            <person name="Noegel A.A."/>
            <person name="Barrell B.G."/>
            <person name="Kuspa A."/>
        </authorList>
    </citation>
    <scope>NUCLEOTIDE SEQUENCE [LARGE SCALE GENOMIC DNA]</scope>
    <source>
        <strain>AX4</strain>
    </source>
</reference>
<protein>
    <recommendedName>
        <fullName>ABC transporter G family member 10</fullName>
    </recommendedName>
    <alternativeName>
        <fullName>ABC transporter ABCG.10</fullName>
    </alternativeName>
</protein>
<proteinExistence type="inferred from homology"/>
<comment type="subcellular location">
    <subcellularLocation>
        <location evidence="4">Membrane</location>
        <topology evidence="4">Multi-pass membrane protein</topology>
    </subcellularLocation>
</comment>
<comment type="similarity">
    <text evidence="4">Belongs to the ABC transporter superfamily. ABCG family. PDR (TC 3.A.1.205) subfamily.</text>
</comment>